<sequence length="409" mass="44224">MPFRRTLLAASLALLITGQAPLYAAPPLSMDNGTNTLTVQNSNAWVEVSASALQHNIRTLQAELAGKSKLCAVLKADAYGHGIGLVMPSIIAQGVPCVAVASNEEARVVRASGFTGQLVRVRLASLSELEDGLQYDMEELVGSAEFARQADAIAARHGKTLRIHMALNSSGMSRNGVEMATWSGRGEALQITDQKHLKLVALMTHFAVEDKDDVRKGLAAFNEQTDWLIKHARLDRSKLTLHAANSFATLEVPEARLDMVRTGGALFGDTVPARTEYKRAMQFKSHVAAVHSYPAGNTVGYDRTFTLARDSRLANITVGYSDGYRRVFTNKGHVLINGHRVPVVGKVSMNTLMVDVTDFPDVKGGNEVVLFGKQAGGEITQAEMEEINGALLADLYTVWGNSNPKILVD</sequence>
<name>BSR_PSEPK</name>
<feature type="signal peptide" evidence="2">
    <location>
        <begin position="1"/>
        <end position="24"/>
    </location>
</feature>
<feature type="chain" id="PRO_5004301730" description="Broad specificity amino-acid racemase" evidence="2">
    <location>
        <begin position="25"/>
        <end position="409"/>
    </location>
</feature>
<feature type="active site" description="Proton acceptor" evidence="2">
    <location>
        <position position="75"/>
    </location>
</feature>
<feature type="active site" description="Proton acceptor" evidence="2">
    <location>
        <position position="301"/>
    </location>
</feature>
<feature type="binding site" evidence="2">
    <location>
        <position position="174"/>
    </location>
    <ligand>
        <name>substrate</name>
    </ligand>
</feature>
<feature type="binding site" evidence="2">
    <location>
        <position position="349"/>
    </location>
    <ligand>
        <name>substrate</name>
    </ligand>
</feature>
<feature type="modified residue" description="N6-(pyridoxal phosphate)lysine" evidence="2">
    <location>
        <position position="75"/>
    </location>
</feature>
<feature type="disulfide bond" evidence="1 2">
    <location>
        <begin position="71"/>
        <end position="97"/>
    </location>
</feature>
<organism>
    <name type="scientific">Pseudomonas putida (strain ATCC 47054 / DSM 6125 / CFBP 8728 / NCIMB 11950 / KT2440)</name>
    <dbReference type="NCBI Taxonomy" id="160488"/>
    <lineage>
        <taxon>Bacteria</taxon>
        <taxon>Pseudomonadati</taxon>
        <taxon>Pseudomonadota</taxon>
        <taxon>Gammaproteobacteria</taxon>
        <taxon>Pseudomonadales</taxon>
        <taxon>Pseudomonadaceae</taxon>
        <taxon>Pseudomonas</taxon>
    </lineage>
</organism>
<gene>
    <name evidence="5 9" type="primary">alr</name>
    <name evidence="9" type="ordered locus">PP_3722</name>
</gene>
<reference key="1">
    <citation type="journal article" date="2002" name="Environ. Microbiol.">
        <title>Complete genome sequence and comparative analysis of the metabolically versatile Pseudomonas putida KT2440.</title>
        <authorList>
            <person name="Nelson K.E."/>
            <person name="Weinel C."/>
            <person name="Paulsen I.T."/>
            <person name="Dodson R.J."/>
            <person name="Hilbert H."/>
            <person name="Martins dos Santos V.A.P."/>
            <person name="Fouts D.E."/>
            <person name="Gill S.R."/>
            <person name="Pop M."/>
            <person name="Holmes M."/>
            <person name="Brinkac L.M."/>
            <person name="Beanan M.J."/>
            <person name="DeBoy R.T."/>
            <person name="Daugherty S.C."/>
            <person name="Kolonay J.F."/>
            <person name="Madupu R."/>
            <person name="Nelson W.C."/>
            <person name="White O."/>
            <person name="Peterson J.D."/>
            <person name="Khouri H.M."/>
            <person name="Hance I."/>
            <person name="Chris Lee P."/>
            <person name="Holtzapple E.K."/>
            <person name="Scanlan D."/>
            <person name="Tran K."/>
            <person name="Moazzez A."/>
            <person name="Utterback T.R."/>
            <person name="Rizzo M."/>
            <person name="Lee K."/>
            <person name="Kosack D."/>
            <person name="Moestl D."/>
            <person name="Wedler H."/>
            <person name="Lauber J."/>
            <person name="Stjepandic D."/>
            <person name="Hoheisel J."/>
            <person name="Straetz M."/>
            <person name="Heim S."/>
            <person name="Kiewitz C."/>
            <person name="Eisen J.A."/>
            <person name="Timmis K.N."/>
            <person name="Duesterhoeft A."/>
            <person name="Tuemmler B."/>
            <person name="Fraser C.M."/>
        </authorList>
    </citation>
    <scope>NUCLEOTIDE SEQUENCE [LARGE SCALE GENOMIC DNA]</scope>
    <source>
        <strain>ATCC 47054 / DSM 6125 / CFBP 8728 / NCIMB 11950 / KT2440</strain>
    </source>
</reference>
<reference key="2">
    <citation type="journal article" date="2013" name="J. Bacteriol.">
        <title>Amino acid racemization in Pseudomonas putida KT2440.</title>
        <authorList>
            <person name="Radkov A.D."/>
            <person name="Moe L.A."/>
        </authorList>
    </citation>
    <scope>FUNCTION</scope>
    <scope>CATALYTIC ACTIVITY</scope>
    <scope>SUBSTRATE SPECIFICITY</scope>
    <scope>BIOPHYSICOCHEMICAL PROPERTIES</scope>
    <source>
        <strain>ATCC 47054 / DSM 6125 / CFBP 8728 / NCIMB 11950 / KT2440</strain>
    </source>
</reference>
<reference key="3">
    <citation type="journal article" date="2018" name="Front. Microbiol.">
        <title>A Broad Spectrum Racemase in Pseudomonas putida KT2440 Plays a Key Role in Amino Acid Catabolism.</title>
        <authorList>
            <person name="Radkov A.D."/>
            <person name="Moe L.A."/>
        </authorList>
    </citation>
    <scope>FUNCTION</scope>
    <scope>SUBCELLULAR LOCATION</scope>
    <scope>DISRUPTION PHENOTYPE</scope>
    <source>
        <strain>ATCC 47054 / DSM 6125 / CFBP 8728 / NCIMB 11950 / KT2440</strain>
    </source>
</reference>
<comment type="function">
    <text evidence="3 4">Amino-acid racemase able to utilize a broad range of substrates. Reversibly racemizes 9 of the 19 natural chiral amino acids known, including both positively charged amino acids (Lys, Arg and His) and non-beta-branched aliphatic amino acids (Ala, Leu, Met, Ser, Gln and Asn). Among these amino acids, activity is the highest with lysine and arginine, and poor or very poor with the others (PubMed:23995642). Plays a primary role in the catabolism of basic amino acid, that allows P.putida strain KT2440 to grow on L-Lys and L-Arg as the sole source of carbon and nitrogen, through conversion to their respective D-enantiomers (PubMed:30008699).</text>
</comment>
<comment type="catalytic activity">
    <reaction evidence="2 3">
        <text>an L-alpha-amino acid = a D-alpha-amino acid</text>
        <dbReference type="Rhea" id="RHEA:18317"/>
        <dbReference type="ChEBI" id="CHEBI:59869"/>
        <dbReference type="ChEBI" id="CHEBI:59871"/>
        <dbReference type="EC" id="5.1.1.10"/>
    </reaction>
</comment>
<comment type="catalytic activity">
    <reaction evidence="2 3 8">
        <text>L-lysine = D-lysine</text>
        <dbReference type="Rhea" id="RHEA:22864"/>
        <dbReference type="ChEBI" id="CHEBI:32551"/>
        <dbReference type="ChEBI" id="CHEBI:32557"/>
    </reaction>
    <physiologicalReaction direction="left-to-right" evidence="8">
        <dbReference type="Rhea" id="RHEA:22865"/>
    </physiologicalReaction>
</comment>
<comment type="catalytic activity">
    <reaction evidence="2 3 8">
        <text>L-arginine = D-arginine</text>
        <dbReference type="Rhea" id="RHEA:18069"/>
        <dbReference type="ChEBI" id="CHEBI:32682"/>
        <dbReference type="ChEBI" id="CHEBI:32689"/>
    </reaction>
    <physiologicalReaction direction="left-to-right" evidence="8">
        <dbReference type="Rhea" id="RHEA:18070"/>
    </physiologicalReaction>
</comment>
<comment type="catalytic activity">
    <reaction evidence="3">
        <text>L-glutamine = D-glutamine</text>
        <dbReference type="Rhea" id="RHEA:59276"/>
        <dbReference type="ChEBI" id="CHEBI:58000"/>
        <dbReference type="ChEBI" id="CHEBI:58359"/>
    </reaction>
</comment>
<comment type="cofactor">
    <cofactor evidence="2">
        <name>pyridoxal 5'-phosphate</name>
        <dbReference type="ChEBI" id="CHEBI:597326"/>
    </cofactor>
</comment>
<comment type="biophysicochemical properties">
    <kinetics>
        <KM evidence="3">0.36 mM for D-lysine</KM>
        <KM evidence="3">8.96 mM for L-lysine</KM>
        <KM evidence="3">15.71 mM for D-alanine</KM>
        <KM evidence="3">12.62 mM for L-alanine</KM>
        <text evidence="3">kcat is 274.5 sec(-1) with D-lysine as substrate. kcat is 1681.7 sec(-1) with L-lysine as substrate. kcat is 8.83 sec(-1) with D-alanine as substrate. kcat is 7.33 sec(-1) with L-alanine as substrate. Thus, the catalytic efficiency with lysine is nearly 3 orders of magnitude greater than that with alanine in both reaction directions.</text>
    </kinetics>
</comment>
<comment type="subcellular location">
    <subcellularLocation>
        <location evidence="2 4">Periplasm</location>
    </subcellularLocation>
</comment>
<comment type="disruption phenotype">
    <text evidence="4">Cells lacking this gene exhibit a limited capacity for catabolism of L-Lys and L-Arg as the sole source of carbon and nitrogen. They don't secrete D-Lys in the growth medium. The stationary phase peptidoglycan structure does not differ between wild-type and the deletion mutant strains, indicating that products resulting from this enzyme activity are not incorporated into peptidoglycan under these conditions.</text>
</comment>
<comment type="similarity">
    <text evidence="2 7">Belongs to the alanine racemase family. Bsr subfamily.</text>
</comment>
<keyword id="KW-1015">Disulfide bond</keyword>
<keyword id="KW-0413">Isomerase</keyword>
<keyword id="KW-0574">Periplasm</keyword>
<keyword id="KW-0663">Pyridoxal phosphate</keyword>
<keyword id="KW-1185">Reference proteome</keyword>
<keyword id="KW-0732">Signal</keyword>
<proteinExistence type="evidence at protein level"/>
<evidence type="ECO:0000250" key="1">
    <source>
        <dbReference type="UniProtKB" id="I0J1I6"/>
    </source>
</evidence>
<evidence type="ECO:0000255" key="2">
    <source>
        <dbReference type="HAMAP-Rule" id="MF_02212"/>
    </source>
</evidence>
<evidence type="ECO:0000269" key="3">
    <source>
    </source>
</evidence>
<evidence type="ECO:0000269" key="4">
    <source>
    </source>
</evidence>
<evidence type="ECO:0000303" key="5">
    <source>
    </source>
</evidence>
<evidence type="ECO:0000303" key="6">
    <source>
    </source>
</evidence>
<evidence type="ECO:0000305" key="7"/>
<evidence type="ECO:0000305" key="8">
    <source>
    </source>
</evidence>
<evidence type="ECO:0000312" key="9">
    <source>
        <dbReference type="EMBL" id="AAN69319.1"/>
    </source>
</evidence>
<protein>
    <recommendedName>
        <fullName evidence="2 8">Broad specificity amino-acid racemase</fullName>
        <ecNumber evidence="2 3">5.1.1.10</ecNumber>
    </recommendedName>
    <alternativeName>
        <fullName evidence="6">Broad spectrum racemase</fullName>
    </alternativeName>
</protein>
<dbReference type="EC" id="5.1.1.10" evidence="2 3"/>
<dbReference type="EMBL" id="AE015451">
    <property type="protein sequence ID" value="AAN69319.1"/>
    <property type="molecule type" value="Genomic_DNA"/>
</dbReference>
<dbReference type="RefSeq" id="NP_745855.1">
    <property type="nucleotide sequence ID" value="NC_002947.4"/>
</dbReference>
<dbReference type="RefSeq" id="WP_010954558.1">
    <property type="nucleotide sequence ID" value="NZ_CP169744.1"/>
</dbReference>
<dbReference type="SMR" id="Q88GJ9"/>
<dbReference type="STRING" id="160488.PP_3722"/>
<dbReference type="PaxDb" id="160488-PP_3722"/>
<dbReference type="GeneID" id="83679605"/>
<dbReference type="KEGG" id="ppu:PP_3722"/>
<dbReference type="PATRIC" id="fig|160488.4.peg.3967"/>
<dbReference type="eggNOG" id="COG0787">
    <property type="taxonomic scope" value="Bacteria"/>
</dbReference>
<dbReference type="HOGENOM" id="CLU_028393_1_1_6"/>
<dbReference type="OrthoDB" id="9813814at2"/>
<dbReference type="PhylomeDB" id="Q88GJ9"/>
<dbReference type="BioCyc" id="MetaCyc:G1G01-3975-MONOMER"/>
<dbReference type="BioCyc" id="PPUT160488:G1G01-3975-MONOMER"/>
<dbReference type="Proteomes" id="UP000000556">
    <property type="component" value="Chromosome"/>
</dbReference>
<dbReference type="GO" id="GO:0005829">
    <property type="term" value="C:cytosol"/>
    <property type="evidence" value="ECO:0007669"/>
    <property type="project" value="TreeGrafter"/>
</dbReference>
<dbReference type="GO" id="GO:0042597">
    <property type="term" value="C:periplasmic space"/>
    <property type="evidence" value="ECO:0007669"/>
    <property type="project" value="UniProtKB-SubCell"/>
</dbReference>
<dbReference type="GO" id="GO:0008784">
    <property type="term" value="F:alanine racemase activity"/>
    <property type="evidence" value="ECO:0007669"/>
    <property type="project" value="InterPro"/>
</dbReference>
<dbReference type="GO" id="GO:0047679">
    <property type="term" value="F:arginine racemase activity"/>
    <property type="evidence" value="ECO:0007669"/>
    <property type="project" value="RHEA"/>
</dbReference>
<dbReference type="GO" id="GO:0018113">
    <property type="term" value="F:lysine racemase activity"/>
    <property type="evidence" value="ECO:0007669"/>
    <property type="project" value="RHEA"/>
</dbReference>
<dbReference type="GO" id="GO:0030170">
    <property type="term" value="F:pyridoxal phosphate binding"/>
    <property type="evidence" value="ECO:0007669"/>
    <property type="project" value="UniProtKB-UniRule"/>
</dbReference>
<dbReference type="CDD" id="cd06826">
    <property type="entry name" value="PLPDE_III_AR2"/>
    <property type="match status" value="1"/>
</dbReference>
<dbReference type="Gene3D" id="3.20.20.10">
    <property type="entry name" value="Alanine racemase"/>
    <property type="match status" value="1"/>
</dbReference>
<dbReference type="Gene3D" id="2.40.37.10">
    <property type="entry name" value="Lyase, Ornithine Decarboxylase, Chain A, domain 1"/>
    <property type="match status" value="1"/>
</dbReference>
<dbReference type="HAMAP" id="MF_02212">
    <property type="entry name" value="Bsr_racemase"/>
    <property type="match status" value="1"/>
</dbReference>
<dbReference type="InterPro" id="IPR000821">
    <property type="entry name" value="Ala_racemase"/>
</dbReference>
<dbReference type="InterPro" id="IPR009006">
    <property type="entry name" value="Ala_racemase/Decarboxylase_C"/>
</dbReference>
<dbReference type="InterPro" id="IPR011079">
    <property type="entry name" value="Ala_racemase_C"/>
</dbReference>
<dbReference type="InterPro" id="IPR001608">
    <property type="entry name" value="Ala_racemase_N"/>
</dbReference>
<dbReference type="InterPro" id="IPR020622">
    <property type="entry name" value="Ala_racemase_pyridoxalP-BS"/>
</dbReference>
<dbReference type="InterPro" id="IPR029066">
    <property type="entry name" value="PLP-binding_barrel"/>
</dbReference>
<dbReference type="InterPro" id="IPR043698">
    <property type="entry name" value="Racemase_Bsr/Lyr"/>
</dbReference>
<dbReference type="NCBIfam" id="TIGR00492">
    <property type="entry name" value="alr"/>
    <property type="match status" value="1"/>
</dbReference>
<dbReference type="NCBIfam" id="NF009879">
    <property type="entry name" value="PRK13340.1-4"/>
    <property type="match status" value="1"/>
</dbReference>
<dbReference type="PANTHER" id="PTHR30511">
    <property type="entry name" value="ALANINE RACEMASE"/>
    <property type="match status" value="1"/>
</dbReference>
<dbReference type="PANTHER" id="PTHR30511:SF0">
    <property type="entry name" value="ALANINE RACEMASE, CATABOLIC-RELATED"/>
    <property type="match status" value="1"/>
</dbReference>
<dbReference type="Pfam" id="PF00842">
    <property type="entry name" value="Ala_racemase_C"/>
    <property type="match status" value="1"/>
</dbReference>
<dbReference type="Pfam" id="PF01168">
    <property type="entry name" value="Ala_racemase_N"/>
    <property type="match status" value="1"/>
</dbReference>
<dbReference type="PRINTS" id="PR00992">
    <property type="entry name" value="ALARACEMASE"/>
</dbReference>
<dbReference type="SMART" id="SM01005">
    <property type="entry name" value="Ala_racemase_C"/>
    <property type="match status" value="1"/>
</dbReference>
<dbReference type="SUPFAM" id="SSF50621">
    <property type="entry name" value="Alanine racemase C-terminal domain-like"/>
    <property type="match status" value="1"/>
</dbReference>
<dbReference type="SUPFAM" id="SSF51419">
    <property type="entry name" value="PLP-binding barrel"/>
    <property type="match status" value="1"/>
</dbReference>
<dbReference type="PROSITE" id="PS00395">
    <property type="entry name" value="ALANINE_RACEMASE"/>
    <property type="match status" value="1"/>
</dbReference>
<accession>Q88GJ9</accession>